<protein>
    <recommendedName>
        <fullName evidence="1">Small heat shock protein IbpA</fullName>
    </recommendedName>
    <alternativeName>
        <fullName evidence="1">16 kDa heat shock protein A</fullName>
    </alternativeName>
</protein>
<reference key="1">
    <citation type="journal article" date="2001" name="Nature">
        <title>Complete genome sequence of Salmonella enterica serovar Typhimurium LT2.</title>
        <authorList>
            <person name="McClelland M."/>
            <person name="Sanderson K.E."/>
            <person name="Spieth J."/>
            <person name="Clifton S.W."/>
            <person name="Latreille P."/>
            <person name="Courtney L."/>
            <person name="Porwollik S."/>
            <person name="Ali J."/>
            <person name="Dante M."/>
            <person name="Du F."/>
            <person name="Hou S."/>
            <person name="Layman D."/>
            <person name="Leonard S."/>
            <person name="Nguyen C."/>
            <person name="Scott K."/>
            <person name="Holmes A."/>
            <person name="Grewal N."/>
            <person name="Mulvaney E."/>
            <person name="Ryan E."/>
            <person name="Sun H."/>
            <person name="Florea L."/>
            <person name="Miller W."/>
            <person name="Stoneking T."/>
            <person name="Nhan M."/>
            <person name="Waterston R."/>
            <person name="Wilson R.K."/>
        </authorList>
    </citation>
    <scope>NUCLEOTIDE SEQUENCE [LARGE SCALE GENOMIC DNA]</scope>
    <source>
        <strain>LT2 / SGSC1412 / ATCC 700720</strain>
    </source>
</reference>
<organism>
    <name type="scientific">Salmonella typhimurium (strain LT2 / SGSC1412 / ATCC 700720)</name>
    <dbReference type="NCBI Taxonomy" id="99287"/>
    <lineage>
        <taxon>Bacteria</taxon>
        <taxon>Pseudomonadati</taxon>
        <taxon>Pseudomonadota</taxon>
        <taxon>Gammaproteobacteria</taxon>
        <taxon>Enterobacterales</taxon>
        <taxon>Enterobacteriaceae</taxon>
        <taxon>Salmonella</taxon>
    </lineage>
</organism>
<accession>Q7CPF1</accession>
<gene>
    <name evidence="1" type="primary">ibpA</name>
    <name type="ordered locus">STM3809</name>
</gene>
<comment type="function">
    <text evidence="1">Associates with aggregated proteins, together with IbpB, to stabilize and protect them from irreversible denaturation and extensive proteolysis during heat shock and oxidative stress. Aggregated proteins bound to the IbpAB complex are more efficiently refolded and reactivated by the ATP-dependent chaperone systems ClpB and DnaK/DnaJ/GrpE. Its activity is ATP-independent.</text>
</comment>
<comment type="subunit">
    <text evidence="1">Monomer. Forms homomultimers of about 100-150 subunits at optimal growth temperatures. Conformation changes to monomers at high temperatures or high ionic concentrations.</text>
</comment>
<comment type="subcellular location">
    <subcellularLocation>
        <location evidence="1">Cytoplasm</location>
    </subcellularLocation>
</comment>
<comment type="similarity">
    <text evidence="1 2">Belongs to the small heat shock protein (HSP20) family.</text>
</comment>
<evidence type="ECO:0000255" key="1">
    <source>
        <dbReference type="HAMAP-Rule" id="MF_02000"/>
    </source>
</evidence>
<evidence type="ECO:0000255" key="2">
    <source>
        <dbReference type="PROSITE-ProRule" id="PRU00285"/>
    </source>
</evidence>
<keyword id="KW-0143">Chaperone</keyword>
<keyword id="KW-0963">Cytoplasm</keyword>
<keyword id="KW-1185">Reference proteome</keyword>
<keyword id="KW-0346">Stress response</keyword>
<name>IBPA_SALTY</name>
<sequence>MRNFDLSPLYRSAIGFDRLFNLLENNQSQSNGGYPPYNVELVDENHYRIAIAVAGFAESELEITAQDNLLVVKGAHADEQKERTYLYQGIAERNFERKFQLAENIHVRGANLVNGLLYIELERVIPEANKPRRIEIN</sequence>
<dbReference type="EMBL" id="AE006468">
    <property type="protein sequence ID" value="AAL22668.1"/>
    <property type="molecule type" value="Genomic_DNA"/>
</dbReference>
<dbReference type="RefSeq" id="NP_462709.3">
    <property type="nucleotide sequence ID" value="NC_003197.2"/>
</dbReference>
<dbReference type="RefSeq" id="WP_001532742.1">
    <property type="nucleotide sequence ID" value="NC_003197.2"/>
</dbReference>
<dbReference type="SMR" id="Q7CPF1"/>
<dbReference type="STRING" id="99287.STM3809"/>
<dbReference type="PaxDb" id="99287-STM3809"/>
<dbReference type="GeneID" id="1255336"/>
<dbReference type="GeneID" id="84234411"/>
<dbReference type="KEGG" id="stm:STM3809"/>
<dbReference type="PATRIC" id="fig|99287.12.peg.4032"/>
<dbReference type="HOGENOM" id="CLU_046737_4_2_6"/>
<dbReference type="PhylomeDB" id="Q7CPF1"/>
<dbReference type="BioCyc" id="SENT99287:STM3809-MONOMER"/>
<dbReference type="Proteomes" id="UP000001014">
    <property type="component" value="Chromosome"/>
</dbReference>
<dbReference type="GO" id="GO:0005737">
    <property type="term" value="C:cytoplasm"/>
    <property type="evidence" value="ECO:0000318"/>
    <property type="project" value="GO_Central"/>
</dbReference>
<dbReference type="GO" id="GO:0050821">
    <property type="term" value="P:protein stabilization"/>
    <property type="evidence" value="ECO:0007669"/>
    <property type="project" value="UniProtKB-UniRule"/>
</dbReference>
<dbReference type="CDD" id="cd06470">
    <property type="entry name" value="ACD_IbpA-B_like"/>
    <property type="match status" value="1"/>
</dbReference>
<dbReference type="FunFam" id="2.60.40.790:FF:000002">
    <property type="entry name" value="Small heat shock protein IbpA"/>
    <property type="match status" value="1"/>
</dbReference>
<dbReference type="Gene3D" id="2.60.40.790">
    <property type="match status" value="1"/>
</dbReference>
<dbReference type="HAMAP" id="MF_02000">
    <property type="entry name" value="HSP20_IbpA"/>
    <property type="match status" value="1"/>
</dbReference>
<dbReference type="InterPro" id="IPR002068">
    <property type="entry name" value="A-crystallin/Hsp20_dom"/>
</dbReference>
<dbReference type="InterPro" id="IPR037913">
    <property type="entry name" value="ACD_IbpA/B"/>
</dbReference>
<dbReference type="InterPro" id="IPR008978">
    <property type="entry name" value="HSP20-like_chaperone"/>
</dbReference>
<dbReference type="InterPro" id="IPR023728">
    <property type="entry name" value="HSP20_IbpA"/>
</dbReference>
<dbReference type="NCBIfam" id="NF008013">
    <property type="entry name" value="PRK10743.1"/>
    <property type="match status" value="1"/>
</dbReference>
<dbReference type="PANTHER" id="PTHR47062">
    <property type="match status" value="1"/>
</dbReference>
<dbReference type="PANTHER" id="PTHR47062:SF1">
    <property type="entry name" value="SMALL HEAT SHOCK PROTEIN IBPA"/>
    <property type="match status" value="1"/>
</dbReference>
<dbReference type="Pfam" id="PF00011">
    <property type="entry name" value="HSP20"/>
    <property type="match status" value="1"/>
</dbReference>
<dbReference type="SUPFAM" id="SSF49764">
    <property type="entry name" value="HSP20-like chaperones"/>
    <property type="match status" value="1"/>
</dbReference>
<dbReference type="PROSITE" id="PS01031">
    <property type="entry name" value="SHSP"/>
    <property type="match status" value="1"/>
</dbReference>
<proteinExistence type="inferred from homology"/>
<feature type="chain" id="PRO_0000126024" description="Small heat shock protein IbpA">
    <location>
        <begin position="1"/>
        <end position="137"/>
    </location>
</feature>
<feature type="domain" description="sHSP" evidence="2">
    <location>
        <begin position="28"/>
        <end position="137"/>
    </location>
</feature>